<feature type="chain" id="PRO_0000334325" description="Na(+)/H(+) antiporter NhaA 1">
    <location>
        <begin position="1"/>
        <end position="434"/>
    </location>
</feature>
<feature type="transmembrane region" description="Helical" evidence="1">
    <location>
        <begin position="30"/>
        <end position="50"/>
    </location>
</feature>
<feature type="transmembrane region" description="Helical" evidence="1">
    <location>
        <begin position="70"/>
        <end position="90"/>
    </location>
</feature>
<feature type="transmembrane region" description="Helical" evidence="1">
    <location>
        <begin position="108"/>
        <end position="128"/>
    </location>
</feature>
<feature type="transmembrane region" description="Helical" evidence="1">
    <location>
        <begin position="141"/>
        <end position="161"/>
    </location>
</feature>
<feature type="transmembrane region" description="Helical" evidence="1">
    <location>
        <begin position="172"/>
        <end position="192"/>
    </location>
</feature>
<feature type="transmembrane region" description="Helical" evidence="1">
    <location>
        <begin position="195"/>
        <end position="215"/>
    </location>
</feature>
<feature type="transmembrane region" description="Helical" evidence="1">
    <location>
        <begin position="286"/>
        <end position="306"/>
    </location>
</feature>
<feature type="transmembrane region" description="Helical" evidence="1">
    <location>
        <begin position="318"/>
        <end position="338"/>
    </location>
</feature>
<feature type="transmembrane region" description="Helical" evidence="1">
    <location>
        <begin position="354"/>
        <end position="374"/>
    </location>
</feature>
<feature type="transmembrane region" description="Helical" evidence="1">
    <location>
        <begin position="386"/>
        <end position="406"/>
    </location>
</feature>
<gene>
    <name evidence="1" type="primary">nhaA1</name>
    <name type="ordered locus">Krad_0203</name>
</gene>
<name>NHAA1_KINRD</name>
<evidence type="ECO:0000255" key="1">
    <source>
        <dbReference type="HAMAP-Rule" id="MF_01844"/>
    </source>
</evidence>
<proteinExistence type="inferred from homology"/>
<sequence>MPSAPQRPLFSRGSWPEARRLADVLRQETTGGLLLLVFTVIALVWANVAGNSYEEVRQFHLGPAALHLDLSIEHWAADGLLAIFFFVTGLELKKEFVAGDLRSPRAAALPIAAAVGGMAVPALLFVLVNVLHPDSPEGALVGWATPTATDIAFALGILAVVGSHLPSALRTFLLTLAVVDDLLGITVIAIFYTEQVHWTPLLLALLTLAAFTVAVQRRVRSWWLLVPLALATWALVHASGIHATVAGVLLGLVVPVLRSEEHGGPEAGPGLSEHFEHRWRPLSTGFAVPVFALFSAGVAIGGVSGFTAAVQDPVALGVIAGLVLGKPIGIVGTTWLLAKLTRAELDENLRWVDVLGMAMLAGMGFTVSLLIGSLAFGEGTAAGEHVTLGVLVGSLLSAVLAAVVLSRRNRVYRRIEAEERVDADGNGVPDVYER</sequence>
<comment type="function">
    <text evidence="1">Na(+)/H(+) antiporter that extrudes sodium in exchange for external protons.</text>
</comment>
<comment type="catalytic activity">
    <reaction evidence="1">
        <text>Na(+)(in) + 2 H(+)(out) = Na(+)(out) + 2 H(+)(in)</text>
        <dbReference type="Rhea" id="RHEA:29251"/>
        <dbReference type="ChEBI" id="CHEBI:15378"/>
        <dbReference type="ChEBI" id="CHEBI:29101"/>
    </reaction>
    <physiologicalReaction direction="left-to-right" evidence="1">
        <dbReference type="Rhea" id="RHEA:29252"/>
    </physiologicalReaction>
</comment>
<comment type="subcellular location">
    <subcellularLocation>
        <location evidence="1">Cell membrane</location>
        <topology evidence="1">Multi-pass membrane protein</topology>
    </subcellularLocation>
</comment>
<comment type="similarity">
    <text evidence="1">Belongs to the NhaA Na(+)/H(+) (TC 2.A.33) antiporter family.</text>
</comment>
<reference key="1">
    <citation type="journal article" date="2008" name="PLoS ONE">
        <title>Survival in nuclear waste, extreme resistance, and potential applications gleaned from the genome sequence of Kineococcus radiotolerans SRS30216.</title>
        <authorList>
            <person name="Bagwell C.E."/>
            <person name="Bhat S."/>
            <person name="Hawkins G.M."/>
            <person name="Smith B.W."/>
            <person name="Biswas T."/>
            <person name="Hoover T.R."/>
            <person name="Saunders E."/>
            <person name="Han C.S."/>
            <person name="Tsodikov O.V."/>
            <person name="Shimkets L.J."/>
        </authorList>
    </citation>
    <scope>NUCLEOTIDE SEQUENCE [LARGE SCALE GENOMIC DNA]</scope>
    <source>
        <strain>ATCC BAA-149 / DSM 14245 / SRS30216</strain>
    </source>
</reference>
<dbReference type="EMBL" id="CP000750">
    <property type="protein sequence ID" value="ABS01694.1"/>
    <property type="molecule type" value="Genomic_DNA"/>
</dbReference>
<dbReference type="RefSeq" id="WP_012085483.1">
    <property type="nucleotide sequence ID" value="NC_009664.2"/>
</dbReference>
<dbReference type="SMR" id="A6W4F5"/>
<dbReference type="STRING" id="266940.Krad_0203"/>
<dbReference type="KEGG" id="kra:Krad_0203"/>
<dbReference type="eggNOG" id="COG3004">
    <property type="taxonomic scope" value="Bacteria"/>
</dbReference>
<dbReference type="HOGENOM" id="CLU_015803_0_0_11"/>
<dbReference type="OrthoDB" id="117402at2"/>
<dbReference type="Proteomes" id="UP000001116">
    <property type="component" value="Chromosome"/>
</dbReference>
<dbReference type="GO" id="GO:0005886">
    <property type="term" value="C:plasma membrane"/>
    <property type="evidence" value="ECO:0007669"/>
    <property type="project" value="UniProtKB-SubCell"/>
</dbReference>
<dbReference type="GO" id="GO:0015385">
    <property type="term" value="F:sodium:proton antiporter activity"/>
    <property type="evidence" value="ECO:0007669"/>
    <property type="project" value="TreeGrafter"/>
</dbReference>
<dbReference type="GO" id="GO:0006885">
    <property type="term" value="P:regulation of pH"/>
    <property type="evidence" value="ECO:0007669"/>
    <property type="project" value="InterPro"/>
</dbReference>
<dbReference type="Gene3D" id="1.20.1530.10">
    <property type="entry name" value="Na+/H+ antiporter like domain"/>
    <property type="match status" value="1"/>
</dbReference>
<dbReference type="HAMAP" id="MF_01844">
    <property type="entry name" value="NhaA"/>
    <property type="match status" value="1"/>
</dbReference>
<dbReference type="InterPro" id="IPR023171">
    <property type="entry name" value="Na/H_antiporter_dom_sf"/>
</dbReference>
<dbReference type="InterPro" id="IPR004670">
    <property type="entry name" value="NhaA"/>
</dbReference>
<dbReference type="NCBIfam" id="TIGR00773">
    <property type="entry name" value="NhaA"/>
    <property type="match status" value="1"/>
</dbReference>
<dbReference type="PANTHER" id="PTHR30341:SF0">
    <property type="entry name" value="NA(+)_H(+) ANTIPORTER NHAA"/>
    <property type="match status" value="1"/>
</dbReference>
<dbReference type="PANTHER" id="PTHR30341">
    <property type="entry name" value="SODIUM ION/PROTON ANTIPORTER NHAA-RELATED"/>
    <property type="match status" value="1"/>
</dbReference>
<dbReference type="Pfam" id="PF06965">
    <property type="entry name" value="Na_H_antiport_1"/>
    <property type="match status" value="1"/>
</dbReference>
<keyword id="KW-0050">Antiport</keyword>
<keyword id="KW-1003">Cell membrane</keyword>
<keyword id="KW-0406">Ion transport</keyword>
<keyword id="KW-0472">Membrane</keyword>
<keyword id="KW-1185">Reference proteome</keyword>
<keyword id="KW-0915">Sodium</keyword>
<keyword id="KW-0739">Sodium transport</keyword>
<keyword id="KW-0812">Transmembrane</keyword>
<keyword id="KW-1133">Transmembrane helix</keyword>
<keyword id="KW-0813">Transport</keyword>
<organism>
    <name type="scientific">Kineococcus radiotolerans (strain ATCC BAA-149 / DSM 14245 / SRS30216)</name>
    <dbReference type="NCBI Taxonomy" id="266940"/>
    <lineage>
        <taxon>Bacteria</taxon>
        <taxon>Bacillati</taxon>
        <taxon>Actinomycetota</taxon>
        <taxon>Actinomycetes</taxon>
        <taxon>Kineosporiales</taxon>
        <taxon>Kineosporiaceae</taxon>
        <taxon>Kineococcus</taxon>
    </lineage>
</organism>
<protein>
    <recommendedName>
        <fullName evidence="1">Na(+)/H(+) antiporter NhaA 1</fullName>
    </recommendedName>
    <alternativeName>
        <fullName evidence="1">Sodium/proton antiporter NhaA 1</fullName>
    </alternativeName>
</protein>
<accession>A6W4F5</accession>